<dbReference type="EMBL" id="CU633749">
    <property type="protein sequence ID" value="CAQ69107.1"/>
    <property type="molecule type" value="Genomic_DNA"/>
</dbReference>
<dbReference type="SMR" id="B3R474"/>
<dbReference type="KEGG" id="cti:RALTA_A1143"/>
<dbReference type="eggNOG" id="COG1076">
    <property type="taxonomic scope" value="Bacteria"/>
</dbReference>
<dbReference type="HOGENOM" id="CLU_068529_2_1_4"/>
<dbReference type="Proteomes" id="UP000001692">
    <property type="component" value="Chromosome 1"/>
</dbReference>
<dbReference type="GO" id="GO:1990230">
    <property type="term" value="C:iron-sulfur cluster transfer complex"/>
    <property type="evidence" value="ECO:0007669"/>
    <property type="project" value="TreeGrafter"/>
</dbReference>
<dbReference type="GO" id="GO:0001671">
    <property type="term" value="F:ATPase activator activity"/>
    <property type="evidence" value="ECO:0007669"/>
    <property type="project" value="InterPro"/>
</dbReference>
<dbReference type="GO" id="GO:0051087">
    <property type="term" value="F:protein-folding chaperone binding"/>
    <property type="evidence" value="ECO:0007669"/>
    <property type="project" value="InterPro"/>
</dbReference>
<dbReference type="GO" id="GO:0044571">
    <property type="term" value="P:[2Fe-2S] cluster assembly"/>
    <property type="evidence" value="ECO:0007669"/>
    <property type="project" value="InterPro"/>
</dbReference>
<dbReference type="GO" id="GO:0051259">
    <property type="term" value="P:protein complex oligomerization"/>
    <property type="evidence" value="ECO:0007669"/>
    <property type="project" value="InterPro"/>
</dbReference>
<dbReference type="GO" id="GO:0006457">
    <property type="term" value="P:protein folding"/>
    <property type="evidence" value="ECO:0007669"/>
    <property type="project" value="UniProtKB-UniRule"/>
</dbReference>
<dbReference type="CDD" id="cd06257">
    <property type="entry name" value="DnaJ"/>
    <property type="match status" value="1"/>
</dbReference>
<dbReference type="Gene3D" id="1.10.287.110">
    <property type="entry name" value="DnaJ domain"/>
    <property type="match status" value="1"/>
</dbReference>
<dbReference type="Gene3D" id="1.20.1280.20">
    <property type="entry name" value="HscB, C-terminal domain"/>
    <property type="match status" value="1"/>
</dbReference>
<dbReference type="HAMAP" id="MF_00682">
    <property type="entry name" value="HscB"/>
    <property type="match status" value="1"/>
</dbReference>
<dbReference type="InterPro" id="IPR001623">
    <property type="entry name" value="DnaJ_domain"/>
</dbReference>
<dbReference type="InterPro" id="IPR004640">
    <property type="entry name" value="HscB"/>
</dbReference>
<dbReference type="InterPro" id="IPR036386">
    <property type="entry name" value="HscB_C_sf"/>
</dbReference>
<dbReference type="InterPro" id="IPR009073">
    <property type="entry name" value="HscB_oligo_C"/>
</dbReference>
<dbReference type="InterPro" id="IPR036869">
    <property type="entry name" value="J_dom_sf"/>
</dbReference>
<dbReference type="NCBIfam" id="TIGR00714">
    <property type="entry name" value="hscB"/>
    <property type="match status" value="1"/>
</dbReference>
<dbReference type="NCBIfam" id="NF002935">
    <property type="entry name" value="PRK03578.1"/>
    <property type="match status" value="1"/>
</dbReference>
<dbReference type="PANTHER" id="PTHR14021">
    <property type="entry name" value="IRON-SULFUR CLUSTER CO-CHAPERONE PROTEIN HSCB"/>
    <property type="match status" value="1"/>
</dbReference>
<dbReference type="PANTHER" id="PTHR14021:SF15">
    <property type="entry name" value="IRON-SULFUR CLUSTER CO-CHAPERONE PROTEIN HSCB"/>
    <property type="match status" value="1"/>
</dbReference>
<dbReference type="Pfam" id="PF07743">
    <property type="entry name" value="HSCB_C"/>
    <property type="match status" value="1"/>
</dbReference>
<dbReference type="SMART" id="SM00271">
    <property type="entry name" value="DnaJ"/>
    <property type="match status" value="1"/>
</dbReference>
<dbReference type="SUPFAM" id="SSF46565">
    <property type="entry name" value="Chaperone J-domain"/>
    <property type="match status" value="1"/>
</dbReference>
<dbReference type="SUPFAM" id="SSF47144">
    <property type="entry name" value="HSC20 (HSCB), C-terminal oligomerisation domain"/>
    <property type="match status" value="1"/>
</dbReference>
<dbReference type="PROSITE" id="PS50076">
    <property type="entry name" value="DNAJ_2"/>
    <property type="match status" value="1"/>
</dbReference>
<sequence length="176" mass="19952">MGKQLKDDFFALFGLPVQYGVDEAALDAAYRTVQSQAHPDRFAKAGDAERRVAMQWAAHANEAYRTLRQPLRRATYLLKLRGVDVQAENNTAMTPAFLMQQMEWREALQEAVEERAVDRLDALLRELRQEKRERHAALGALLDAGDNEAAGGAVRQLMFIEKIEHDTSEAIDRLED</sequence>
<gene>
    <name evidence="1" type="primary">hscB</name>
    <name type="ordered locus">RALTA_A1143</name>
</gene>
<comment type="function">
    <text evidence="1">Co-chaperone involved in the maturation of iron-sulfur cluster-containing proteins. Seems to help targeting proteins to be folded toward HscA.</text>
</comment>
<comment type="subunit">
    <text evidence="1">Interacts with HscA and stimulates its ATPase activity.</text>
</comment>
<comment type="similarity">
    <text evidence="1">Belongs to the HscB family.</text>
</comment>
<organism>
    <name type="scientific">Cupriavidus taiwanensis (strain DSM 17343 / BCRC 17206 / CCUG 44338 / CIP 107171 / LMG 19424 / R1)</name>
    <name type="common">Ralstonia taiwanensis (strain LMG 19424)</name>
    <dbReference type="NCBI Taxonomy" id="977880"/>
    <lineage>
        <taxon>Bacteria</taxon>
        <taxon>Pseudomonadati</taxon>
        <taxon>Pseudomonadota</taxon>
        <taxon>Betaproteobacteria</taxon>
        <taxon>Burkholderiales</taxon>
        <taxon>Burkholderiaceae</taxon>
        <taxon>Cupriavidus</taxon>
    </lineage>
</organism>
<keyword id="KW-0143">Chaperone</keyword>
<accession>B3R474</accession>
<name>HSCB_CUPTR</name>
<evidence type="ECO:0000255" key="1">
    <source>
        <dbReference type="HAMAP-Rule" id="MF_00682"/>
    </source>
</evidence>
<feature type="chain" id="PRO_1000131731" description="Co-chaperone protein HscB homolog">
    <location>
        <begin position="1"/>
        <end position="176"/>
    </location>
</feature>
<feature type="domain" description="J" evidence="1">
    <location>
        <begin position="8"/>
        <end position="80"/>
    </location>
</feature>
<proteinExistence type="inferred from homology"/>
<protein>
    <recommendedName>
        <fullName evidence="1">Co-chaperone protein HscB homolog</fullName>
    </recommendedName>
</protein>
<reference key="1">
    <citation type="journal article" date="2008" name="Genome Res.">
        <title>Genome sequence of the beta-rhizobium Cupriavidus taiwanensis and comparative genomics of rhizobia.</title>
        <authorList>
            <person name="Amadou C."/>
            <person name="Pascal G."/>
            <person name="Mangenot S."/>
            <person name="Glew M."/>
            <person name="Bontemps C."/>
            <person name="Capela D."/>
            <person name="Carrere S."/>
            <person name="Cruveiller S."/>
            <person name="Dossat C."/>
            <person name="Lajus A."/>
            <person name="Marchetti M."/>
            <person name="Poinsot V."/>
            <person name="Rouy Z."/>
            <person name="Servin B."/>
            <person name="Saad M."/>
            <person name="Schenowitz C."/>
            <person name="Barbe V."/>
            <person name="Batut J."/>
            <person name="Medigue C."/>
            <person name="Masson-Boivin C."/>
        </authorList>
    </citation>
    <scope>NUCLEOTIDE SEQUENCE [LARGE SCALE GENOMIC DNA]</scope>
    <source>
        <strain>DSM 17343 / BCRC 17206 / CCUG 44338 / CIP 107171 / LMG 19424 / R1</strain>
    </source>
</reference>